<sequence>MNIFKKKTTPKDALRTSKREMAVATRGIEREITSLQLEEKRLVAEIKKTAKTGNEAATKILARQLVRLRQQITNLQGSRAQIRGVTTHTQALYASTSISSGMKGATKAMVAMNKQMAPTKQAKVIKDFQKQSAQLDMTIEMMSEAIDETLDKDEAEEETEDLTNQVLDEIGVGVASQLSSAPKGRIATKTAAPPASTAATNKNSESSEVDELEKRLASLRRI</sequence>
<organism>
    <name type="scientific">Arabidopsis thaliana</name>
    <name type="common">Mouse-ear cress</name>
    <dbReference type="NCBI Taxonomy" id="3702"/>
    <lineage>
        <taxon>Eukaryota</taxon>
        <taxon>Viridiplantae</taxon>
        <taxon>Streptophyta</taxon>
        <taxon>Embryophyta</taxon>
        <taxon>Tracheophyta</taxon>
        <taxon>Spermatophyta</taxon>
        <taxon>Magnoliopsida</taxon>
        <taxon>eudicotyledons</taxon>
        <taxon>Gunneridae</taxon>
        <taxon>Pentapetalae</taxon>
        <taxon>rosids</taxon>
        <taxon>malvids</taxon>
        <taxon>Brassicales</taxon>
        <taxon>Brassicaceae</taxon>
        <taxon>Camelineae</taxon>
        <taxon>Arabidopsis</taxon>
    </lineage>
</organism>
<accession>Q0WTY4</accession>
<accession>B3H7E8</accession>
<accession>Q84TF3</accession>
<accession>Q9FGV7</accession>
<gene>
    <name type="primary">VPS2.2</name>
    <name type="synonym">CHMP2-2</name>
    <name type="ordered locus">At5g44560</name>
    <name type="ORF">MFC16.25</name>
</gene>
<name>VPS2B_ARATH</name>
<comment type="function">
    <text evidence="1">Component of the ESCRT-III complex, which is required for multivesicular bodies (MVBs) formation and sorting of endosomal cargo proteins into MVBs. The ESCRT-III complex is probably involved in the concentration of MVB cargo (By similarity).</text>
</comment>
<comment type="subunit">
    <text evidence="2 5">Component of the endosomal sorting required for transport complex III (ESCRT-III), composed at least of VPS2, VPS20, VPS24 and VPS32 (By similarity). Interacts with CHMP1A, CHMP1B and VPS60-1 (PubMed:22010978).</text>
</comment>
<comment type="interaction">
    <interactant intactId="EBI-3865323">
        <id>Q0WTY4</id>
    </interactant>
    <interactant intactId="EBI-6391458">
        <id>Q8LE58</id>
        <label>CHMP1A</label>
    </interactant>
    <organismsDiffer>false</organismsDiffer>
    <experiments>4</experiments>
</comment>
<comment type="interaction">
    <interactant intactId="EBI-3865323">
        <id>Q0WTY4</id>
    </interactant>
    <interactant intactId="EBI-3865345">
        <id>Q9SKI2</id>
        <label>VPS2.1</label>
    </interactant>
    <organismsDiffer>false</organismsDiffer>
    <experiments>3</experiments>
</comment>
<comment type="interaction">
    <interactant intactId="EBI-3865323">
        <id>Q0WTY4</id>
    </interactant>
    <interactant intactId="EBI-3865310">
        <id>O65421</id>
        <label>VPS28-1</label>
    </interactant>
    <organismsDiffer>false</organismsDiffer>
    <experiments>4</experiments>
</comment>
<comment type="interaction">
    <interactant intactId="EBI-3865323">
        <id>Q0WTY4</id>
    </interactant>
    <interactant intactId="EBI-3865953">
        <id>Q9SZE4</id>
        <label>VPS32.2</label>
    </interactant>
    <organismsDiffer>false</organismsDiffer>
    <experiments>3</experiments>
</comment>
<comment type="subcellular location">
    <subcellularLocation>
        <location evidence="1">Endosome</location>
    </subcellularLocation>
</comment>
<comment type="alternative products">
    <event type="alternative splicing"/>
    <isoform>
        <id>Q0WTY4-1</id>
        <name>1</name>
        <sequence type="displayed"/>
    </isoform>
    <isoform>
        <id>Q0WTY4-2</id>
        <name>2</name>
        <sequence type="described" ref="VSP_036803"/>
    </isoform>
</comment>
<comment type="similarity">
    <text evidence="6">Belongs to the SNF7 family.</text>
</comment>
<comment type="sequence caution" evidence="6">
    <conflict type="erroneous gene model prediction">
        <sequence resource="EMBL-CDS" id="BAB11575"/>
    </conflict>
</comment>
<reference key="1">
    <citation type="submission" date="1999-02" db="EMBL/GenBank/DDBJ databases">
        <title>Structural analysis of Arabidopsis thaliana chromosome 5. XI.</title>
        <authorList>
            <person name="Kaneko T."/>
            <person name="Katoh T."/>
            <person name="Asamizu E."/>
            <person name="Sato S."/>
            <person name="Nakamura Y."/>
            <person name="Kotani H."/>
            <person name="Tabata S."/>
        </authorList>
    </citation>
    <scope>NUCLEOTIDE SEQUENCE [LARGE SCALE GENOMIC DNA]</scope>
    <source>
        <strain>cv. Columbia</strain>
    </source>
</reference>
<reference key="2">
    <citation type="journal article" date="1999" name="DNA Res.">
        <title>Structural analysis of Arabidopsis thaliana chromosome 5. IX. Sequence features of the regions of 1,011,550 bp covered by seventeen P1 and TAC clones.</title>
        <authorList>
            <person name="Kaneko T."/>
            <person name="Katoh T."/>
            <person name="Sato S."/>
            <person name="Nakamura Y."/>
            <person name="Asamizu E."/>
            <person name="Kotani H."/>
            <person name="Miyajima N."/>
            <person name="Tabata S."/>
        </authorList>
    </citation>
    <scope>NUCLEOTIDE SEQUENCE [LARGE SCALE GENOMIC DNA]</scope>
    <source>
        <strain>cv. Columbia</strain>
    </source>
</reference>
<reference key="3">
    <citation type="journal article" date="2017" name="Plant J.">
        <title>Araport11: a complete reannotation of the Arabidopsis thaliana reference genome.</title>
        <authorList>
            <person name="Cheng C.Y."/>
            <person name="Krishnakumar V."/>
            <person name="Chan A.P."/>
            <person name="Thibaud-Nissen F."/>
            <person name="Schobel S."/>
            <person name="Town C.D."/>
        </authorList>
    </citation>
    <scope>GENOME REANNOTATION</scope>
    <source>
        <strain>cv. Columbia</strain>
    </source>
</reference>
<reference key="4">
    <citation type="submission" date="2006-07" db="EMBL/GenBank/DDBJ databases">
        <title>Large-scale analysis of RIKEN Arabidopsis full-length (RAFL) cDNAs.</title>
        <authorList>
            <person name="Totoki Y."/>
            <person name="Seki M."/>
            <person name="Ishida J."/>
            <person name="Nakajima M."/>
            <person name="Enju A."/>
            <person name="Kamiya A."/>
            <person name="Narusaka M."/>
            <person name="Shin-i T."/>
            <person name="Nakagawa M."/>
            <person name="Sakamoto N."/>
            <person name="Oishi K."/>
            <person name="Kohara Y."/>
            <person name="Kobayashi M."/>
            <person name="Toyoda A."/>
            <person name="Sakaki Y."/>
            <person name="Sakurai T."/>
            <person name="Iida K."/>
            <person name="Akiyama K."/>
            <person name="Satou M."/>
            <person name="Toyoda T."/>
            <person name="Konagaya A."/>
            <person name="Carninci P."/>
            <person name="Kawai J."/>
            <person name="Hayashizaki Y."/>
            <person name="Shinozaki K."/>
        </authorList>
    </citation>
    <scope>NUCLEOTIDE SEQUENCE [LARGE SCALE MRNA]</scope>
    <source>
        <strain>cv. Columbia</strain>
    </source>
</reference>
<reference key="5">
    <citation type="journal article" date="2003" name="Science">
        <title>Empirical analysis of transcriptional activity in the Arabidopsis genome.</title>
        <authorList>
            <person name="Yamada K."/>
            <person name="Lim J."/>
            <person name="Dale J.M."/>
            <person name="Chen H."/>
            <person name="Shinn P."/>
            <person name="Palm C.J."/>
            <person name="Southwick A.M."/>
            <person name="Wu H.C."/>
            <person name="Kim C.J."/>
            <person name="Nguyen M."/>
            <person name="Pham P.K."/>
            <person name="Cheuk R.F."/>
            <person name="Karlin-Newmann G."/>
            <person name="Liu S.X."/>
            <person name="Lam B."/>
            <person name="Sakano H."/>
            <person name="Wu T."/>
            <person name="Yu G."/>
            <person name="Miranda M."/>
            <person name="Quach H.L."/>
            <person name="Tripp M."/>
            <person name="Chang C.H."/>
            <person name="Lee J.M."/>
            <person name="Toriumi M.J."/>
            <person name="Chan M.M."/>
            <person name="Tang C.C."/>
            <person name="Onodera C.S."/>
            <person name="Deng J.M."/>
            <person name="Akiyama K."/>
            <person name="Ansari Y."/>
            <person name="Arakawa T."/>
            <person name="Banh J."/>
            <person name="Banno F."/>
            <person name="Bowser L."/>
            <person name="Brooks S.Y."/>
            <person name="Carninci P."/>
            <person name="Chao Q."/>
            <person name="Choy N."/>
            <person name="Enju A."/>
            <person name="Goldsmith A.D."/>
            <person name="Gurjal M."/>
            <person name="Hansen N.F."/>
            <person name="Hayashizaki Y."/>
            <person name="Johnson-Hopson C."/>
            <person name="Hsuan V.W."/>
            <person name="Iida K."/>
            <person name="Karnes M."/>
            <person name="Khan S."/>
            <person name="Koesema E."/>
            <person name="Ishida J."/>
            <person name="Jiang P.X."/>
            <person name="Jones T."/>
            <person name="Kawai J."/>
            <person name="Kamiya A."/>
            <person name="Meyers C."/>
            <person name="Nakajima M."/>
            <person name="Narusaka M."/>
            <person name="Seki M."/>
            <person name="Sakurai T."/>
            <person name="Satou M."/>
            <person name="Tamse R."/>
            <person name="Vaysberg M."/>
            <person name="Wallender E.K."/>
            <person name="Wong C."/>
            <person name="Yamamura Y."/>
            <person name="Yuan S."/>
            <person name="Shinozaki K."/>
            <person name="Davis R.W."/>
            <person name="Theologis A."/>
            <person name="Ecker J.R."/>
        </authorList>
    </citation>
    <scope>NUCLEOTIDE SEQUENCE [LARGE SCALE MRNA] OF 1-203</scope>
    <source>
        <strain>cv. Columbia</strain>
    </source>
</reference>
<reference key="6">
    <citation type="journal article" date="2006" name="Development">
        <title>The Arabidopsis elch mutant reveals functions of an ESCRT component in cytokinesis.</title>
        <authorList>
            <person name="Spitzer C."/>
            <person name="Schellmann S."/>
            <person name="Sabovljevic A."/>
            <person name="Shahriari M."/>
            <person name="Keshavaiah C."/>
            <person name="Bechtold N."/>
            <person name="Herzog M."/>
            <person name="Mueller S."/>
            <person name="Hanisch F.-G."/>
            <person name="Huelskamp M."/>
        </authorList>
    </citation>
    <scope>IDENTIFICATION</scope>
    <scope>NOMENCLATURE</scope>
</reference>
<reference key="7">
    <citation type="journal article" date="2006" name="Trends Plant Sci.">
        <title>Exploring the ESCRTing machinery in eukaryotes.</title>
        <authorList>
            <person name="Winter V."/>
            <person name="Hauser M.-T."/>
        </authorList>
    </citation>
    <scope>IDENTIFICATION</scope>
</reference>
<reference key="8">
    <citation type="journal article" date="2012" name="J. Proteome Res.">
        <title>Interactome of the plant-specific ESCRT-III component AtVPS2.2 in Arabidopsis thaliana.</title>
        <authorList>
            <person name="Ibl V."/>
            <person name="Csaszar E."/>
            <person name="Schlager N."/>
            <person name="Neubert S."/>
            <person name="Spitzer C."/>
            <person name="Hauser M.T."/>
        </authorList>
    </citation>
    <scope>INTERACTION WITH CHMP1A; CHMP1B AND VPS60-1</scope>
</reference>
<protein>
    <recommendedName>
        <fullName>Vacuolar protein sorting-associated protein 2 homolog 2</fullName>
        <shortName>AtVPS2-2</shortName>
    </recommendedName>
    <alternativeName>
        <fullName>Charged multivesicular body protein 2 homolog 2</fullName>
    </alternativeName>
    <alternativeName>
        <fullName>ESCRT-III complex subunit VPS2 homolog 2</fullName>
    </alternativeName>
</protein>
<evidence type="ECO:0000250" key="1"/>
<evidence type="ECO:0000250" key="2">
    <source>
        <dbReference type="UniProtKB" id="O43633"/>
    </source>
</evidence>
<evidence type="ECO:0000255" key="3"/>
<evidence type="ECO:0000256" key="4">
    <source>
        <dbReference type="SAM" id="MobiDB-lite"/>
    </source>
</evidence>
<evidence type="ECO:0000269" key="5">
    <source>
    </source>
</evidence>
<evidence type="ECO:0000305" key="6"/>
<dbReference type="EMBL" id="AB024024">
    <property type="protein sequence ID" value="BAB11575.1"/>
    <property type="status" value="ALT_SEQ"/>
    <property type="molecule type" value="Genomic_DNA"/>
</dbReference>
<dbReference type="EMBL" id="AB017065">
    <property type="protein sequence ID" value="BAB11575.1"/>
    <property type="status" value="JOINED"/>
    <property type="molecule type" value="Genomic_DNA"/>
</dbReference>
<dbReference type="EMBL" id="CP002688">
    <property type="protein sequence ID" value="AED95123.1"/>
    <property type="molecule type" value="Genomic_DNA"/>
</dbReference>
<dbReference type="EMBL" id="CP002688">
    <property type="protein sequence ID" value="AED95124.1"/>
    <property type="molecule type" value="Genomic_DNA"/>
</dbReference>
<dbReference type="EMBL" id="AK227410">
    <property type="protein sequence ID" value="BAE99414.1"/>
    <property type="molecule type" value="mRNA"/>
</dbReference>
<dbReference type="EMBL" id="BT005848">
    <property type="protein sequence ID" value="AAO64783.1"/>
    <property type="molecule type" value="mRNA"/>
</dbReference>
<dbReference type="RefSeq" id="NP_001119371.1">
    <molecule id="Q0WTY4-2"/>
    <property type="nucleotide sequence ID" value="NM_001125899.1"/>
</dbReference>
<dbReference type="RefSeq" id="NP_199269.1">
    <molecule id="Q0WTY4-1"/>
    <property type="nucleotide sequence ID" value="NM_123823.6"/>
</dbReference>
<dbReference type="SMR" id="Q0WTY4"/>
<dbReference type="BioGRID" id="19733">
    <property type="interactions" value="39"/>
</dbReference>
<dbReference type="FunCoup" id="Q0WTY4">
    <property type="interactions" value="2280"/>
</dbReference>
<dbReference type="IntAct" id="Q0WTY4">
    <property type="interactions" value="35"/>
</dbReference>
<dbReference type="STRING" id="3702.Q0WTY4"/>
<dbReference type="TCDB" id="3.A.31.1.2">
    <property type="family name" value="the endosomal sorting complexes required for transport iii (escrt-iii) family"/>
</dbReference>
<dbReference type="iPTMnet" id="Q0WTY4"/>
<dbReference type="PaxDb" id="3702-AT5G44560.1"/>
<dbReference type="ProteomicsDB" id="242569">
    <molecule id="Q0WTY4-1"/>
</dbReference>
<dbReference type="EnsemblPlants" id="AT5G44560.1">
    <molecule id="Q0WTY4-1"/>
    <property type="protein sequence ID" value="AT5G44560.1"/>
    <property type="gene ID" value="AT5G44560"/>
</dbReference>
<dbReference type="EnsemblPlants" id="AT5G44560.2">
    <molecule id="Q0WTY4-2"/>
    <property type="protein sequence ID" value="AT5G44560.2"/>
    <property type="gene ID" value="AT5G44560"/>
</dbReference>
<dbReference type="GeneID" id="834483"/>
<dbReference type="Gramene" id="AT5G44560.1">
    <molecule id="Q0WTY4-1"/>
    <property type="protein sequence ID" value="AT5G44560.1"/>
    <property type="gene ID" value="AT5G44560"/>
</dbReference>
<dbReference type="Gramene" id="AT5G44560.2">
    <molecule id="Q0WTY4-2"/>
    <property type="protein sequence ID" value="AT5G44560.2"/>
    <property type="gene ID" value="AT5G44560"/>
</dbReference>
<dbReference type="KEGG" id="ath:AT5G44560"/>
<dbReference type="Araport" id="AT5G44560"/>
<dbReference type="TAIR" id="AT5G44560">
    <property type="gene designation" value="VPS2.2"/>
</dbReference>
<dbReference type="eggNOG" id="KOG3230">
    <property type="taxonomic scope" value="Eukaryota"/>
</dbReference>
<dbReference type="HOGENOM" id="CLU_069208_1_1_1"/>
<dbReference type="InParanoid" id="Q0WTY4"/>
<dbReference type="OMA" id="QDMFEDD"/>
<dbReference type="OrthoDB" id="5594417at2759"/>
<dbReference type="PhylomeDB" id="Q0WTY4"/>
<dbReference type="PRO" id="PR:Q0WTY4"/>
<dbReference type="Proteomes" id="UP000006548">
    <property type="component" value="Chromosome 5"/>
</dbReference>
<dbReference type="ExpressionAtlas" id="Q0WTY4">
    <property type="expression patterns" value="baseline and differential"/>
</dbReference>
<dbReference type="GO" id="GO:0000815">
    <property type="term" value="C:ESCRT III complex"/>
    <property type="evidence" value="ECO:0000250"/>
    <property type="project" value="TAIR"/>
</dbReference>
<dbReference type="GO" id="GO:0015031">
    <property type="term" value="P:protein transport"/>
    <property type="evidence" value="ECO:0007669"/>
    <property type="project" value="UniProtKB-KW"/>
</dbReference>
<dbReference type="GO" id="GO:0007034">
    <property type="term" value="P:vacuolar transport"/>
    <property type="evidence" value="ECO:0007669"/>
    <property type="project" value="InterPro"/>
</dbReference>
<dbReference type="Gene3D" id="6.10.140.1230">
    <property type="match status" value="1"/>
</dbReference>
<dbReference type="InterPro" id="IPR005024">
    <property type="entry name" value="Snf7_fam"/>
</dbReference>
<dbReference type="PANTHER" id="PTHR10476">
    <property type="entry name" value="CHARGED MULTIVESICULAR BODY PROTEIN"/>
    <property type="match status" value="1"/>
</dbReference>
<dbReference type="Pfam" id="PF03357">
    <property type="entry name" value="Snf7"/>
    <property type="match status" value="1"/>
</dbReference>
<proteinExistence type="evidence at protein level"/>
<feature type="chain" id="PRO_0000368196" description="Vacuolar protein sorting-associated protein 2 homolog 2">
    <location>
        <begin position="1"/>
        <end position="222"/>
    </location>
</feature>
<feature type="region of interest" description="Disordered" evidence="4">
    <location>
        <begin position="179"/>
        <end position="222"/>
    </location>
</feature>
<feature type="coiled-coil region" evidence="3">
    <location>
        <begin position="26"/>
        <end position="83"/>
    </location>
</feature>
<feature type="coiled-coil region" evidence="3">
    <location>
        <begin position="143"/>
        <end position="222"/>
    </location>
</feature>
<feature type="compositionally biased region" description="Low complexity" evidence="4">
    <location>
        <begin position="187"/>
        <end position="203"/>
    </location>
</feature>
<feature type="splice variant" id="VSP_036803" description="In isoform 2." evidence="6">
    <location>
        <begin position="1"/>
        <end position="20"/>
    </location>
</feature>
<feature type="sequence conflict" description="In Ref. 5; AAO64783." evidence="6" ref="5">
    <original>A</original>
    <variation>G</variation>
    <location>
        <position position="199"/>
    </location>
</feature>
<feature type="sequence conflict" description="In Ref. 2; BAE99414 and 5; AAO64783." evidence="6" ref="2 5">
    <original>N</original>
    <variation>S</variation>
    <location>
        <position position="201"/>
    </location>
</feature>
<keyword id="KW-0025">Alternative splicing</keyword>
<keyword id="KW-0175">Coiled coil</keyword>
<keyword id="KW-0967">Endosome</keyword>
<keyword id="KW-0653">Protein transport</keyword>
<keyword id="KW-1185">Reference proteome</keyword>
<keyword id="KW-0813">Transport</keyword>